<protein>
    <recommendedName>
        <fullName evidence="1">Large ribosomal subunit protein bL9</fullName>
    </recommendedName>
    <alternativeName>
        <fullName evidence="2">50S ribosomal protein L9</fullName>
    </alternativeName>
</protein>
<organism>
    <name type="scientific">Chlamydia abortus (strain DSM 27085 / S26/3)</name>
    <name type="common">Chlamydophila abortus</name>
    <dbReference type="NCBI Taxonomy" id="218497"/>
    <lineage>
        <taxon>Bacteria</taxon>
        <taxon>Pseudomonadati</taxon>
        <taxon>Chlamydiota</taxon>
        <taxon>Chlamydiia</taxon>
        <taxon>Chlamydiales</taxon>
        <taxon>Chlamydiaceae</taxon>
        <taxon>Chlamydia/Chlamydophila group</taxon>
        <taxon>Chlamydia</taxon>
    </lineage>
</organism>
<dbReference type="EMBL" id="CR848038">
    <property type="protein sequence ID" value="CAH64227.1"/>
    <property type="molecule type" value="Genomic_DNA"/>
</dbReference>
<dbReference type="RefSeq" id="WP_011097332.1">
    <property type="nucleotide sequence ID" value="NC_004552.2"/>
</dbReference>
<dbReference type="SMR" id="Q5L567"/>
<dbReference type="GeneID" id="93024337"/>
<dbReference type="KEGG" id="cab:CAB785"/>
<dbReference type="eggNOG" id="COG0359">
    <property type="taxonomic scope" value="Bacteria"/>
</dbReference>
<dbReference type="HOGENOM" id="CLU_078938_3_0_0"/>
<dbReference type="OrthoDB" id="9788336at2"/>
<dbReference type="Proteomes" id="UP000001012">
    <property type="component" value="Chromosome"/>
</dbReference>
<dbReference type="GO" id="GO:1990904">
    <property type="term" value="C:ribonucleoprotein complex"/>
    <property type="evidence" value="ECO:0007669"/>
    <property type="project" value="UniProtKB-KW"/>
</dbReference>
<dbReference type="GO" id="GO:0005840">
    <property type="term" value="C:ribosome"/>
    <property type="evidence" value="ECO:0007669"/>
    <property type="project" value="UniProtKB-KW"/>
</dbReference>
<dbReference type="GO" id="GO:0019843">
    <property type="term" value="F:rRNA binding"/>
    <property type="evidence" value="ECO:0007669"/>
    <property type="project" value="UniProtKB-UniRule"/>
</dbReference>
<dbReference type="GO" id="GO:0003735">
    <property type="term" value="F:structural constituent of ribosome"/>
    <property type="evidence" value="ECO:0007669"/>
    <property type="project" value="InterPro"/>
</dbReference>
<dbReference type="GO" id="GO:0006412">
    <property type="term" value="P:translation"/>
    <property type="evidence" value="ECO:0007669"/>
    <property type="project" value="UniProtKB-UniRule"/>
</dbReference>
<dbReference type="Gene3D" id="3.10.430.100">
    <property type="entry name" value="Ribosomal protein L9, C-terminal domain"/>
    <property type="match status" value="1"/>
</dbReference>
<dbReference type="Gene3D" id="3.40.5.10">
    <property type="entry name" value="Ribosomal protein L9, N-terminal domain"/>
    <property type="match status" value="1"/>
</dbReference>
<dbReference type="HAMAP" id="MF_00503">
    <property type="entry name" value="Ribosomal_bL9"/>
    <property type="match status" value="1"/>
</dbReference>
<dbReference type="InterPro" id="IPR000244">
    <property type="entry name" value="Ribosomal_bL9"/>
</dbReference>
<dbReference type="InterPro" id="IPR009027">
    <property type="entry name" value="Ribosomal_bL9/RNase_H1_N"/>
</dbReference>
<dbReference type="InterPro" id="IPR020594">
    <property type="entry name" value="Ribosomal_bL9_bac/chp"/>
</dbReference>
<dbReference type="InterPro" id="IPR020069">
    <property type="entry name" value="Ribosomal_bL9_C"/>
</dbReference>
<dbReference type="InterPro" id="IPR036791">
    <property type="entry name" value="Ribosomal_bL9_C_sf"/>
</dbReference>
<dbReference type="InterPro" id="IPR020070">
    <property type="entry name" value="Ribosomal_bL9_N"/>
</dbReference>
<dbReference type="InterPro" id="IPR036935">
    <property type="entry name" value="Ribosomal_bL9_N_sf"/>
</dbReference>
<dbReference type="NCBIfam" id="TIGR00158">
    <property type="entry name" value="L9"/>
    <property type="match status" value="1"/>
</dbReference>
<dbReference type="PANTHER" id="PTHR21368">
    <property type="entry name" value="50S RIBOSOMAL PROTEIN L9"/>
    <property type="match status" value="1"/>
</dbReference>
<dbReference type="Pfam" id="PF03948">
    <property type="entry name" value="Ribosomal_L9_C"/>
    <property type="match status" value="1"/>
</dbReference>
<dbReference type="Pfam" id="PF01281">
    <property type="entry name" value="Ribosomal_L9_N"/>
    <property type="match status" value="1"/>
</dbReference>
<dbReference type="SUPFAM" id="SSF55658">
    <property type="entry name" value="L9 N-domain-like"/>
    <property type="match status" value="1"/>
</dbReference>
<dbReference type="SUPFAM" id="SSF55653">
    <property type="entry name" value="Ribosomal protein L9 C-domain"/>
    <property type="match status" value="1"/>
</dbReference>
<dbReference type="PROSITE" id="PS00651">
    <property type="entry name" value="RIBOSOMAL_L9"/>
    <property type="match status" value="1"/>
</dbReference>
<feature type="chain" id="PRO_0000236505" description="Large ribosomal subunit protein bL9">
    <location>
        <begin position="1"/>
        <end position="172"/>
    </location>
</feature>
<evidence type="ECO:0000255" key="1">
    <source>
        <dbReference type="HAMAP-Rule" id="MF_00503"/>
    </source>
</evidence>
<evidence type="ECO:0000305" key="2"/>
<comment type="function">
    <text evidence="1">Binds to the 23S rRNA.</text>
</comment>
<comment type="similarity">
    <text evidence="1">Belongs to the bacterial ribosomal protein bL9 family.</text>
</comment>
<sequence>MKQQLLLLEDVEGLGRSGDIVTARPGYVRNYLLPKQKAVIAGAGTLRLQAKLKEERLLRAAADREESEKLAQILKDIVLEFQVRVDPDNNMYGSVTVSDIIAEAAKKNIVLTRKNFPHAHYAIKNLGKKSVPLKLKEDVTATLIVEVSSESSYVAVLNPQPSQEQTAAEELN</sequence>
<accession>Q5L567</accession>
<keyword id="KW-0687">Ribonucleoprotein</keyword>
<keyword id="KW-0689">Ribosomal protein</keyword>
<keyword id="KW-0694">RNA-binding</keyword>
<keyword id="KW-0699">rRNA-binding</keyword>
<reference key="1">
    <citation type="journal article" date="2005" name="Genome Res.">
        <title>The Chlamydophila abortus genome sequence reveals an array of variable proteins that contribute to interspecies variation.</title>
        <authorList>
            <person name="Thomson N.R."/>
            <person name="Yeats C."/>
            <person name="Bell K."/>
            <person name="Holden M.T.G."/>
            <person name="Bentley S.D."/>
            <person name="Livingstone M."/>
            <person name="Cerdeno-Tarraga A.-M."/>
            <person name="Harris B."/>
            <person name="Doggett J."/>
            <person name="Ormond D."/>
            <person name="Mungall K."/>
            <person name="Clarke K."/>
            <person name="Feltwell T."/>
            <person name="Hance Z."/>
            <person name="Sanders M."/>
            <person name="Quail M.A."/>
            <person name="Price C."/>
            <person name="Barrell B.G."/>
            <person name="Parkhill J."/>
            <person name="Longbottom D."/>
        </authorList>
    </citation>
    <scope>NUCLEOTIDE SEQUENCE [LARGE SCALE GENOMIC DNA]</scope>
    <source>
        <strain>DSM 27085 / S26/3</strain>
    </source>
</reference>
<name>RL9_CHLAB</name>
<gene>
    <name evidence="1" type="primary">rplI</name>
    <name type="ordered locus">CAB785</name>
</gene>
<proteinExistence type="inferred from homology"/>